<feature type="chain" id="PRO_0000215138" description="Glucokinase">
    <location>
        <begin position="1"/>
        <end position="321"/>
    </location>
</feature>
<feature type="binding site" evidence="1">
    <location>
        <begin position="8"/>
        <end position="13"/>
    </location>
    <ligand>
        <name>ATP</name>
        <dbReference type="ChEBI" id="CHEBI:30616"/>
    </ligand>
</feature>
<keyword id="KW-0067">ATP-binding</keyword>
<keyword id="KW-0963">Cytoplasm</keyword>
<keyword id="KW-0324">Glycolysis</keyword>
<keyword id="KW-0418">Kinase</keyword>
<keyword id="KW-0547">Nucleotide-binding</keyword>
<keyword id="KW-1185">Reference proteome</keyword>
<keyword id="KW-0808">Transferase</keyword>
<proteinExistence type="inferred from homology"/>
<protein>
    <recommendedName>
        <fullName evidence="1">Glucokinase</fullName>
        <ecNumber evidence="1">2.7.1.2</ecNumber>
    </recommendedName>
    <alternativeName>
        <fullName evidence="1">Glucose kinase</fullName>
    </alternativeName>
</protein>
<name>GLK_SALTY</name>
<sequence>MTKYALVGDVGGTNARLALCDIASGEISQAKTYSGLDYPSLEAVVRVYLDEHSVSVEDGCIAIACPITGDWVAMTNHTWAFSIAEMKKNLGFSHLEIINDFTAVSMAIPMLKKEHLIQFGGGEPVDGKPIAVYGAGTGLGVAHLVHVDKRWISLPGEGGHVDFAPNSEEEAMILEILRAEIGHVSAERVLSGPGLVNLYRAIVKSDNRLPENLRPKDITERALADSCIDCRRALSLFCVIMGRFGGDLALTMGTFGGVYIAGGIVPRFLEFFKASGFRGGFEDKGRFKDYVHGIPVYLIVHDNPGLLGSGAHLRQTLGHIL</sequence>
<organism>
    <name type="scientific">Salmonella typhimurium (strain LT2 / SGSC1412 / ATCC 700720)</name>
    <dbReference type="NCBI Taxonomy" id="99287"/>
    <lineage>
        <taxon>Bacteria</taxon>
        <taxon>Pseudomonadati</taxon>
        <taxon>Pseudomonadota</taxon>
        <taxon>Gammaproteobacteria</taxon>
        <taxon>Enterobacterales</taxon>
        <taxon>Enterobacteriaceae</taxon>
        <taxon>Salmonella</taxon>
    </lineage>
</organism>
<dbReference type="EC" id="2.7.1.2" evidence="1"/>
<dbReference type="EMBL" id="AJ401270">
    <property type="protein sequence ID" value="CAC48241.1"/>
    <property type="molecule type" value="Genomic_DNA"/>
</dbReference>
<dbReference type="EMBL" id="AE006468">
    <property type="protein sequence ID" value="AAL21303.1"/>
    <property type="molecule type" value="Genomic_DNA"/>
</dbReference>
<dbReference type="RefSeq" id="NP_461344.1">
    <property type="nucleotide sequence ID" value="NC_003197.2"/>
</dbReference>
<dbReference type="RefSeq" id="WP_000170380.1">
    <property type="nucleotide sequence ID" value="NC_003197.2"/>
</dbReference>
<dbReference type="SMR" id="Q93IM5"/>
<dbReference type="STRING" id="99287.STM2403"/>
<dbReference type="PaxDb" id="99287-STM2403"/>
<dbReference type="GeneID" id="1253925"/>
<dbReference type="KEGG" id="stm:STM2403"/>
<dbReference type="PATRIC" id="fig|99287.12.peg.2545"/>
<dbReference type="HOGENOM" id="CLU_042582_1_0_6"/>
<dbReference type="OMA" id="NNHWRLS"/>
<dbReference type="PhylomeDB" id="Q93IM5"/>
<dbReference type="BioCyc" id="SENT99287:STM2403-MONOMER"/>
<dbReference type="Proteomes" id="UP000001014">
    <property type="component" value="Chromosome"/>
</dbReference>
<dbReference type="GO" id="GO:0005829">
    <property type="term" value="C:cytosol"/>
    <property type="evidence" value="ECO:0000318"/>
    <property type="project" value="GO_Central"/>
</dbReference>
<dbReference type="GO" id="GO:0005524">
    <property type="term" value="F:ATP binding"/>
    <property type="evidence" value="ECO:0007669"/>
    <property type="project" value="UniProtKB-UniRule"/>
</dbReference>
<dbReference type="GO" id="GO:0005536">
    <property type="term" value="F:D-glucose binding"/>
    <property type="evidence" value="ECO:0007669"/>
    <property type="project" value="InterPro"/>
</dbReference>
<dbReference type="GO" id="GO:0004340">
    <property type="term" value="F:glucokinase activity"/>
    <property type="evidence" value="ECO:0000318"/>
    <property type="project" value="GO_Central"/>
</dbReference>
<dbReference type="GO" id="GO:0006096">
    <property type="term" value="P:glycolytic process"/>
    <property type="evidence" value="ECO:0007669"/>
    <property type="project" value="UniProtKB-UniRule"/>
</dbReference>
<dbReference type="CDD" id="cd24008">
    <property type="entry name" value="ASKHA_NBD_GLK"/>
    <property type="match status" value="1"/>
</dbReference>
<dbReference type="FunFam" id="3.30.420.40:FF:000045">
    <property type="entry name" value="Glucokinase"/>
    <property type="match status" value="1"/>
</dbReference>
<dbReference type="FunFam" id="3.40.367.20:FF:000002">
    <property type="entry name" value="Glucokinase"/>
    <property type="match status" value="1"/>
</dbReference>
<dbReference type="Gene3D" id="3.30.420.40">
    <property type="match status" value="1"/>
</dbReference>
<dbReference type="Gene3D" id="3.40.367.20">
    <property type="match status" value="1"/>
</dbReference>
<dbReference type="HAMAP" id="MF_00524">
    <property type="entry name" value="Glucokinase"/>
    <property type="match status" value="1"/>
</dbReference>
<dbReference type="InterPro" id="IPR043129">
    <property type="entry name" value="ATPase_NBD"/>
</dbReference>
<dbReference type="InterPro" id="IPR050201">
    <property type="entry name" value="Bacterial_glucokinase"/>
</dbReference>
<dbReference type="InterPro" id="IPR003836">
    <property type="entry name" value="Glucokinase"/>
</dbReference>
<dbReference type="NCBIfam" id="TIGR00749">
    <property type="entry name" value="glk"/>
    <property type="match status" value="1"/>
</dbReference>
<dbReference type="NCBIfam" id="NF001414">
    <property type="entry name" value="PRK00292.1-1"/>
    <property type="match status" value="1"/>
</dbReference>
<dbReference type="NCBIfam" id="NF001416">
    <property type="entry name" value="PRK00292.1-3"/>
    <property type="match status" value="1"/>
</dbReference>
<dbReference type="PANTHER" id="PTHR47690">
    <property type="entry name" value="GLUCOKINASE"/>
    <property type="match status" value="1"/>
</dbReference>
<dbReference type="PANTHER" id="PTHR47690:SF1">
    <property type="entry name" value="GLUCOKINASE"/>
    <property type="match status" value="1"/>
</dbReference>
<dbReference type="Pfam" id="PF02685">
    <property type="entry name" value="Glucokinase"/>
    <property type="match status" value="1"/>
</dbReference>
<dbReference type="SUPFAM" id="SSF53067">
    <property type="entry name" value="Actin-like ATPase domain"/>
    <property type="match status" value="1"/>
</dbReference>
<evidence type="ECO:0000255" key="1">
    <source>
        <dbReference type="HAMAP-Rule" id="MF_00524"/>
    </source>
</evidence>
<comment type="catalytic activity">
    <reaction evidence="1">
        <text>D-glucose + ATP = D-glucose 6-phosphate + ADP + H(+)</text>
        <dbReference type="Rhea" id="RHEA:17825"/>
        <dbReference type="ChEBI" id="CHEBI:4167"/>
        <dbReference type="ChEBI" id="CHEBI:15378"/>
        <dbReference type="ChEBI" id="CHEBI:30616"/>
        <dbReference type="ChEBI" id="CHEBI:61548"/>
        <dbReference type="ChEBI" id="CHEBI:456216"/>
        <dbReference type="EC" id="2.7.1.2"/>
    </reaction>
</comment>
<comment type="subcellular location">
    <subcellularLocation>
        <location evidence="1">Cytoplasm</location>
    </subcellularLocation>
</comment>
<comment type="similarity">
    <text evidence="1">Belongs to the bacterial glucokinase family.</text>
</comment>
<accession>Q93IM5</accession>
<reference key="1">
    <citation type="submission" date="2000-07" db="EMBL/GenBank/DDBJ databases">
        <title>Nucleotide sequence of the Salmonella typhimurium ipd gene encoding a putative indole-3-pyruvate decarboxylase.</title>
        <authorList>
            <person name="Norel F."/>
        </authorList>
    </citation>
    <scope>NUCLEOTIDE SEQUENCE [GENOMIC DNA]</scope>
    <source>
        <strain>C52</strain>
    </source>
</reference>
<reference key="2">
    <citation type="journal article" date="2001" name="Nature">
        <title>Complete genome sequence of Salmonella enterica serovar Typhimurium LT2.</title>
        <authorList>
            <person name="McClelland M."/>
            <person name="Sanderson K.E."/>
            <person name="Spieth J."/>
            <person name="Clifton S.W."/>
            <person name="Latreille P."/>
            <person name="Courtney L."/>
            <person name="Porwollik S."/>
            <person name="Ali J."/>
            <person name="Dante M."/>
            <person name="Du F."/>
            <person name="Hou S."/>
            <person name="Layman D."/>
            <person name="Leonard S."/>
            <person name="Nguyen C."/>
            <person name="Scott K."/>
            <person name="Holmes A."/>
            <person name="Grewal N."/>
            <person name="Mulvaney E."/>
            <person name="Ryan E."/>
            <person name="Sun H."/>
            <person name="Florea L."/>
            <person name="Miller W."/>
            <person name="Stoneking T."/>
            <person name="Nhan M."/>
            <person name="Waterston R."/>
            <person name="Wilson R.K."/>
        </authorList>
    </citation>
    <scope>NUCLEOTIDE SEQUENCE [LARGE SCALE GENOMIC DNA]</scope>
    <source>
        <strain>LT2 / SGSC1412 / ATCC 700720</strain>
    </source>
</reference>
<gene>
    <name evidence="1" type="primary">glk</name>
    <name type="ordered locus">STM2403</name>
</gene>